<feature type="chain" id="PRO_0000175608" description="Holo-[acyl-carrier-protein] synthase">
    <location>
        <begin position="1"/>
        <end position="119"/>
    </location>
</feature>
<feature type="binding site" evidence="1">
    <location>
        <position position="8"/>
    </location>
    <ligand>
        <name>Mg(2+)</name>
        <dbReference type="ChEBI" id="CHEBI:18420"/>
    </ligand>
</feature>
<feature type="binding site" evidence="1">
    <location>
        <position position="58"/>
    </location>
    <ligand>
        <name>Mg(2+)</name>
        <dbReference type="ChEBI" id="CHEBI:18420"/>
    </ligand>
</feature>
<dbReference type="EC" id="2.7.8.7" evidence="1"/>
<dbReference type="EMBL" id="AE016877">
    <property type="protein sequence ID" value="AAP07331.1"/>
    <property type="molecule type" value="Genomic_DNA"/>
</dbReference>
<dbReference type="RefSeq" id="NP_830130.1">
    <property type="nucleotide sequence ID" value="NC_004722.1"/>
</dbReference>
<dbReference type="RefSeq" id="WP_000583416.1">
    <property type="nucleotide sequence ID" value="NZ_CP138336.1"/>
</dbReference>
<dbReference type="SMR" id="Q81IT7"/>
<dbReference type="STRING" id="226900.BC_0262"/>
<dbReference type="KEGG" id="bce:BC0262"/>
<dbReference type="PATRIC" id="fig|226900.8.peg.262"/>
<dbReference type="HOGENOM" id="CLU_089696_1_2_9"/>
<dbReference type="OrthoDB" id="517356at2"/>
<dbReference type="Proteomes" id="UP000001417">
    <property type="component" value="Chromosome"/>
</dbReference>
<dbReference type="GO" id="GO:0005829">
    <property type="term" value="C:cytosol"/>
    <property type="evidence" value="ECO:0000318"/>
    <property type="project" value="GO_Central"/>
</dbReference>
<dbReference type="GO" id="GO:0008897">
    <property type="term" value="F:holo-[acyl-carrier-protein] synthase activity"/>
    <property type="evidence" value="ECO:0000318"/>
    <property type="project" value="GO_Central"/>
</dbReference>
<dbReference type="GO" id="GO:0000287">
    <property type="term" value="F:magnesium ion binding"/>
    <property type="evidence" value="ECO:0007669"/>
    <property type="project" value="UniProtKB-UniRule"/>
</dbReference>
<dbReference type="GO" id="GO:0006633">
    <property type="term" value="P:fatty acid biosynthetic process"/>
    <property type="evidence" value="ECO:0007669"/>
    <property type="project" value="UniProtKB-UniRule"/>
</dbReference>
<dbReference type="GO" id="GO:0019878">
    <property type="term" value="P:lysine biosynthetic process via aminoadipic acid"/>
    <property type="evidence" value="ECO:0000318"/>
    <property type="project" value="GO_Central"/>
</dbReference>
<dbReference type="Gene3D" id="3.90.470.20">
    <property type="entry name" value="4'-phosphopantetheinyl transferase domain"/>
    <property type="match status" value="1"/>
</dbReference>
<dbReference type="HAMAP" id="MF_00101">
    <property type="entry name" value="AcpS"/>
    <property type="match status" value="1"/>
</dbReference>
<dbReference type="InterPro" id="IPR008278">
    <property type="entry name" value="4-PPantetheinyl_Trfase_dom"/>
</dbReference>
<dbReference type="InterPro" id="IPR037143">
    <property type="entry name" value="4-PPantetheinyl_Trfase_dom_sf"/>
</dbReference>
<dbReference type="InterPro" id="IPR002582">
    <property type="entry name" value="ACPS"/>
</dbReference>
<dbReference type="InterPro" id="IPR050559">
    <property type="entry name" value="P-Pant_transferase_sf"/>
</dbReference>
<dbReference type="InterPro" id="IPR004568">
    <property type="entry name" value="Ppantetheine-prot_Trfase_dom"/>
</dbReference>
<dbReference type="NCBIfam" id="TIGR00516">
    <property type="entry name" value="acpS"/>
    <property type="match status" value="1"/>
</dbReference>
<dbReference type="NCBIfam" id="TIGR00556">
    <property type="entry name" value="pantethn_trn"/>
    <property type="match status" value="1"/>
</dbReference>
<dbReference type="PANTHER" id="PTHR12215:SF10">
    <property type="entry name" value="L-AMINOADIPATE-SEMIALDEHYDE DEHYDROGENASE-PHOSPHOPANTETHEINYL TRANSFERASE"/>
    <property type="match status" value="1"/>
</dbReference>
<dbReference type="PANTHER" id="PTHR12215">
    <property type="entry name" value="PHOSPHOPANTETHEINE TRANSFERASE"/>
    <property type="match status" value="1"/>
</dbReference>
<dbReference type="Pfam" id="PF01648">
    <property type="entry name" value="ACPS"/>
    <property type="match status" value="1"/>
</dbReference>
<dbReference type="SUPFAM" id="SSF56214">
    <property type="entry name" value="4'-phosphopantetheinyl transferase"/>
    <property type="match status" value="1"/>
</dbReference>
<comment type="function">
    <text evidence="1">Transfers the 4'-phosphopantetheine moiety from coenzyme A to a Ser of acyl-carrier-protein.</text>
</comment>
<comment type="catalytic activity">
    <reaction evidence="1">
        <text>apo-[ACP] + CoA = holo-[ACP] + adenosine 3',5'-bisphosphate + H(+)</text>
        <dbReference type="Rhea" id="RHEA:12068"/>
        <dbReference type="Rhea" id="RHEA-COMP:9685"/>
        <dbReference type="Rhea" id="RHEA-COMP:9690"/>
        <dbReference type="ChEBI" id="CHEBI:15378"/>
        <dbReference type="ChEBI" id="CHEBI:29999"/>
        <dbReference type="ChEBI" id="CHEBI:57287"/>
        <dbReference type="ChEBI" id="CHEBI:58343"/>
        <dbReference type="ChEBI" id="CHEBI:64479"/>
        <dbReference type="EC" id="2.7.8.7"/>
    </reaction>
</comment>
<comment type="cofactor">
    <cofactor evidence="1">
        <name>Mg(2+)</name>
        <dbReference type="ChEBI" id="CHEBI:18420"/>
    </cofactor>
</comment>
<comment type="subcellular location">
    <subcellularLocation>
        <location evidence="1">Cytoplasm</location>
    </subcellularLocation>
</comment>
<comment type="similarity">
    <text evidence="1">Belongs to the P-Pant transferase superfamily. AcpS family.</text>
</comment>
<proteinExistence type="inferred from homology"/>
<evidence type="ECO:0000255" key="1">
    <source>
        <dbReference type="HAMAP-Rule" id="MF_00101"/>
    </source>
</evidence>
<gene>
    <name evidence="1" type="primary">acpS</name>
    <name type="ordered locus">BC_0262</name>
</gene>
<accession>Q81IT7</accession>
<name>ACPS_BACCR</name>
<keyword id="KW-0963">Cytoplasm</keyword>
<keyword id="KW-0275">Fatty acid biosynthesis</keyword>
<keyword id="KW-0276">Fatty acid metabolism</keyword>
<keyword id="KW-0444">Lipid biosynthesis</keyword>
<keyword id="KW-0443">Lipid metabolism</keyword>
<keyword id="KW-0460">Magnesium</keyword>
<keyword id="KW-0479">Metal-binding</keyword>
<keyword id="KW-1185">Reference proteome</keyword>
<keyword id="KW-0808">Transferase</keyword>
<protein>
    <recommendedName>
        <fullName evidence="1">Holo-[acyl-carrier-protein] synthase</fullName>
        <shortName evidence="1">Holo-ACP synthase</shortName>
        <ecNumber evidence="1">2.7.8.7</ecNumber>
    </recommendedName>
    <alternativeName>
        <fullName evidence="1">4'-phosphopantetheinyl transferase AcpS</fullName>
    </alternativeName>
</protein>
<organism>
    <name type="scientific">Bacillus cereus (strain ATCC 14579 / DSM 31 / CCUG 7414 / JCM 2152 / NBRC 15305 / NCIMB 9373 / NCTC 2599 / NRRL B-3711)</name>
    <dbReference type="NCBI Taxonomy" id="226900"/>
    <lineage>
        <taxon>Bacteria</taxon>
        <taxon>Bacillati</taxon>
        <taxon>Bacillota</taxon>
        <taxon>Bacilli</taxon>
        <taxon>Bacillales</taxon>
        <taxon>Bacillaceae</taxon>
        <taxon>Bacillus</taxon>
        <taxon>Bacillus cereus group</taxon>
    </lineage>
</organism>
<sequence>MIIGIGIDIIELNRIEKMLDGKLKFMERILTENERNVAMELKGSRLTEFVAGRFAAKEAYSKAVGTGIGKEVSFLDIEVKNDERGKPILITSTEYIVHLSISHSKEFAVAQVVLESLSR</sequence>
<reference key="1">
    <citation type="journal article" date="2003" name="Nature">
        <title>Genome sequence of Bacillus cereus and comparative analysis with Bacillus anthracis.</title>
        <authorList>
            <person name="Ivanova N."/>
            <person name="Sorokin A."/>
            <person name="Anderson I."/>
            <person name="Galleron N."/>
            <person name="Candelon B."/>
            <person name="Kapatral V."/>
            <person name="Bhattacharyya A."/>
            <person name="Reznik G."/>
            <person name="Mikhailova N."/>
            <person name="Lapidus A."/>
            <person name="Chu L."/>
            <person name="Mazur M."/>
            <person name="Goltsman E."/>
            <person name="Larsen N."/>
            <person name="D'Souza M."/>
            <person name="Walunas T."/>
            <person name="Grechkin Y."/>
            <person name="Pusch G."/>
            <person name="Haselkorn R."/>
            <person name="Fonstein M."/>
            <person name="Ehrlich S.D."/>
            <person name="Overbeek R."/>
            <person name="Kyrpides N.C."/>
        </authorList>
    </citation>
    <scope>NUCLEOTIDE SEQUENCE [LARGE SCALE GENOMIC DNA]</scope>
    <source>
        <strain>ATCC 14579 / DSM 31 / CCUG 7414 / JCM 2152 / NBRC 15305 / NCIMB 9373 / NCTC 2599 / NRRL B-3711</strain>
    </source>
</reference>